<comment type="similarity">
    <text evidence="1">Belongs to the bacterial ribosomal protein bL35 family.</text>
</comment>
<accession>A2C5C6</accession>
<gene>
    <name evidence="1" type="primary">rpmI</name>
    <name evidence="1" type="synonym">rpl35</name>
    <name type="ordered locus">NATL1_21301</name>
</gene>
<proteinExistence type="inferred from homology"/>
<evidence type="ECO:0000255" key="1">
    <source>
        <dbReference type="HAMAP-Rule" id="MF_00514"/>
    </source>
</evidence>
<evidence type="ECO:0000305" key="2"/>
<protein>
    <recommendedName>
        <fullName evidence="1">Large ribosomal subunit protein bL35</fullName>
    </recommendedName>
    <alternativeName>
        <fullName evidence="2">50S ribosomal protein L35</fullName>
    </alternativeName>
</protein>
<feature type="chain" id="PRO_1000050739" description="Large ribosomal subunit protein bL35">
    <location>
        <begin position="1"/>
        <end position="65"/>
    </location>
</feature>
<reference key="1">
    <citation type="journal article" date="2007" name="PLoS Genet.">
        <title>Patterns and implications of gene gain and loss in the evolution of Prochlorococcus.</title>
        <authorList>
            <person name="Kettler G.C."/>
            <person name="Martiny A.C."/>
            <person name="Huang K."/>
            <person name="Zucker J."/>
            <person name="Coleman M.L."/>
            <person name="Rodrigue S."/>
            <person name="Chen F."/>
            <person name="Lapidus A."/>
            <person name="Ferriera S."/>
            <person name="Johnson J."/>
            <person name="Steglich C."/>
            <person name="Church G.M."/>
            <person name="Richardson P."/>
            <person name="Chisholm S.W."/>
        </authorList>
    </citation>
    <scope>NUCLEOTIDE SEQUENCE [LARGE SCALE GENOMIC DNA]</scope>
    <source>
        <strain>NATL1A</strain>
    </source>
</reference>
<sequence length="65" mass="7611">MPKLKTRKAAAKRFKATGTGKFMRRRAFHNHLLDHKSPKLKRHLKTKAVVDERDAENVRLMLPYA</sequence>
<dbReference type="EMBL" id="CP000553">
    <property type="protein sequence ID" value="ABM76686.1"/>
    <property type="molecule type" value="Genomic_DNA"/>
</dbReference>
<dbReference type="RefSeq" id="WP_011295603.1">
    <property type="nucleotide sequence ID" value="NC_008819.1"/>
</dbReference>
<dbReference type="SMR" id="A2C5C6"/>
<dbReference type="KEGG" id="pme:NATL1_21301"/>
<dbReference type="eggNOG" id="COG0291">
    <property type="taxonomic scope" value="Bacteria"/>
</dbReference>
<dbReference type="HOGENOM" id="CLU_169643_4_0_3"/>
<dbReference type="Proteomes" id="UP000002592">
    <property type="component" value="Chromosome"/>
</dbReference>
<dbReference type="GO" id="GO:0022625">
    <property type="term" value="C:cytosolic large ribosomal subunit"/>
    <property type="evidence" value="ECO:0007669"/>
    <property type="project" value="TreeGrafter"/>
</dbReference>
<dbReference type="GO" id="GO:0003735">
    <property type="term" value="F:structural constituent of ribosome"/>
    <property type="evidence" value="ECO:0007669"/>
    <property type="project" value="InterPro"/>
</dbReference>
<dbReference type="GO" id="GO:0006412">
    <property type="term" value="P:translation"/>
    <property type="evidence" value="ECO:0007669"/>
    <property type="project" value="UniProtKB-UniRule"/>
</dbReference>
<dbReference type="FunFam" id="4.10.410.60:FF:000001">
    <property type="entry name" value="50S ribosomal protein L35"/>
    <property type="match status" value="1"/>
</dbReference>
<dbReference type="Gene3D" id="4.10.410.60">
    <property type="match status" value="1"/>
</dbReference>
<dbReference type="HAMAP" id="MF_00514">
    <property type="entry name" value="Ribosomal_bL35"/>
    <property type="match status" value="1"/>
</dbReference>
<dbReference type="InterPro" id="IPR001706">
    <property type="entry name" value="Ribosomal_bL35"/>
</dbReference>
<dbReference type="InterPro" id="IPR021137">
    <property type="entry name" value="Ribosomal_bL35-like"/>
</dbReference>
<dbReference type="InterPro" id="IPR018265">
    <property type="entry name" value="Ribosomal_bL35_CS"/>
</dbReference>
<dbReference type="InterPro" id="IPR037229">
    <property type="entry name" value="Ribosomal_bL35_sf"/>
</dbReference>
<dbReference type="NCBIfam" id="TIGR00001">
    <property type="entry name" value="rpmI_bact"/>
    <property type="match status" value="1"/>
</dbReference>
<dbReference type="PANTHER" id="PTHR33343">
    <property type="entry name" value="54S RIBOSOMAL PROTEIN BL35M"/>
    <property type="match status" value="1"/>
</dbReference>
<dbReference type="PANTHER" id="PTHR33343:SF1">
    <property type="entry name" value="LARGE RIBOSOMAL SUBUNIT PROTEIN BL35M"/>
    <property type="match status" value="1"/>
</dbReference>
<dbReference type="Pfam" id="PF01632">
    <property type="entry name" value="Ribosomal_L35p"/>
    <property type="match status" value="1"/>
</dbReference>
<dbReference type="PRINTS" id="PR00064">
    <property type="entry name" value="RIBOSOMALL35"/>
</dbReference>
<dbReference type="SUPFAM" id="SSF143034">
    <property type="entry name" value="L35p-like"/>
    <property type="match status" value="1"/>
</dbReference>
<dbReference type="PROSITE" id="PS00936">
    <property type="entry name" value="RIBOSOMAL_L35"/>
    <property type="match status" value="1"/>
</dbReference>
<keyword id="KW-0687">Ribonucleoprotein</keyword>
<keyword id="KW-0689">Ribosomal protein</keyword>
<name>RL35_PROM1</name>
<organism>
    <name type="scientific">Prochlorococcus marinus (strain NATL1A)</name>
    <dbReference type="NCBI Taxonomy" id="167555"/>
    <lineage>
        <taxon>Bacteria</taxon>
        <taxon>Bacillati</taxon>
        <taxon>Cyanobacteriota</taxon>
        <taxon>Cyanophyceae</taxon>
        <taxon>Synechococcales</taxon>
        <taxon>Prochlorococcaceae</taxon>
        <taxon>Prochlorococcus</taxon>
    </lineage>
</organism>